<dbReference type="EC" id="3.1.-.-"/>
<dbReference type="EMBL" id="X12591">
    <property type="protein sequence ID" value="CAA31104.1"/>
    <property type="molecule type" value="Genomic_DNA"/>
</dbReference>
<dbReference type="EMBL" id="X15858">
    <property type="protein sequence ID" value="CAA33862.1"/>
    <property type="molecule type" value="Genomic_DNA"/>
</dbReference>
<dbReference type="PIR" id="PQ0032">
    <property type="entry name" value="PQ0032"/>
</dbReference>
<dbReference type="RefSeq" id="WP_012644886.1">
    <property type="nucleotide sequence ID" value="NC_011977.1"/>
</dbReference>
<dbReference type="RefSeq" id="YP_002533537.1">
    <property type="nucleotide sequence ID" value="NC_011977.1"/>
</dbReference>
<dbReference type="PDB" id="1BXI">
    <property type="method" value="X-ray"/>
    <property type="resolution" value="2.05 A"/>
    <property type="chains" value="B=449-582"/>
</dbReference>
<dbReference type="PDB" id="1EMV">
    <property type="method" value="X-ray"/>
    <property type="resolution" value="1.70 A"/>
    <property type="chains" value="B=450-582"/>
</dbReference>
<dbReference type="PDB" id="1FR2">
    <property type="method" value="X-ray"/>
    <property type="resolution" value="1.60 A"/>
    <property type="chains" value="B=450-582"/>
</dbReference>
<dbReference type="PDB" id="1FSJ">
    <property type="method" value="X-ray"/>
    <property type="resolution" value="1.80 A"/>
    <property type="chains" value="B/C/D/E=450-582"/>
</dbReference>
<dbReference type="PDB" id="1V13">
    <property type="method" value="X-ray"/>
    <property type="resolution" value="2.00 A"/>
    <property type="chains" value="A/B=450-582"/>
</dbReference>
<dbReference type="PDB" id="1V14">
    <property type="method" value="X-ray"/>
    <property type="resolution" value="2.90 A"/>
    <property type="chains" value="A/B/C/D=450-582"/>
</dbReference>
<dbReference type="PDB" id="1V15">
    <property type="method" value="X-ray"/>
    <property type="resolution" value="2.40 A"/>
    <property type="chains" value="A/B/C/D=450-582"/>
</dbReference>
<dbReference type="PDB" id="2GYK">
    <property type="method" value="X-ray"/>
    <property type="resolution" value="1.60 A"/>
    <property type="chains" value="B/F=450-582"/>
</dbReference>
<dbReference type="PDB" id="2GZE">
    <property type="method" value="X-ray"/>
    <property type="resolution" value="1.80 A"/>
    <property type="chains" value="B=450-582"/>
</dbReference>
<dbReference type="PDB" id="2GZF">
    <property type="method" value="X-ray"/>
    <property type="resolution" value="1.75 A"/>
    <property type="chains" value="B=450-582"/>
</dbReference>
<dbReference type="PDB" id="2GZG">
    <property type="method" value="X-ray"/>
    <property type="resolution" value="1.70 A"/>
    <property type="chains" value="B=450-582"/>
</dbReference>
<dbReference type="PDB" id="2GZI">
    <property type="method" value="X-ray"/>
    <property type="resolution" value="1.70 A"/>
    <property type="chains" value="B=450-582"/>
</dbReference>
<dbReference type="PDB" id="2GZJ">
    <property type="method" value="X-ray"/>
    <property type="resolution" value="1.60 A"/>
    <property type="chains" value="B/F=450-582"/>
</dbReference>
<dbReference type="PDB" id="2IVZ">
    <property type="method" value="X-ray"/>
    <property type="resolution" value="2.00 A"/>
    <property type="chains" value="E/F/G/H=32-47"/>
</dbReference>
<dbReference type="PDB" id="2K5X">
    <property type="method" value="NMR"/>
    <property type="chains" value="B=450-582"/>
</dbReference>
<dbReference type="PDB" id="2VLN">
    <property type="method" value="X-ray"/>
    <property type="resolution" value="1.60 A"/>
    <property type="chains" value="B=450-582"/>
</dbReference>
<dbReference type="PDB" id="2VLO">
    <property type="method" value="X-ray"/>
    <property type="resolution" value="1.80 A"/>
    <property type="chains" value="B=450-582"/>
</dbReference>
<dbReference type="PDB" id="2VLP">
    <property type="method" value="X-ray"/>
    <property type="resolution" value="2.00 A"/>
    <property type="chains" value="B=450-582"/>
</dbReference>
<dbReference type="PDB" id="2VLQ">
    <property type="method" value="X-ray"/>
    <property type="resolution" value="1.60 A"/>
    <property type="chains" value="B=450-582"/>
</dbReference>
<dbReference type="PDB" id="2WPT">
    <property type="method" value="X-ray"/>
    <property type="resolution" value="1.78 A"/>
    <property type="chains" value="B=450-582"/>
</dbReference>
<dbReference type="PDB" id="3O0E">
    <property type="method" value="X-ray"/>
    <property type="resolution" value="3.01 A"/>
    <property type="chains" value="L/M/N/O/P/Q=2-18"/>
</dbReference>
<dbReference type="PDB" id="4JML">
    <property type="method" value="X-ray"/>
    <property type="resolution" value="2.00 A"/>
    <property type="chains" value="E=32-47"/>
</dbReference>
<dbReference type="PDB" id="5EW5">
    <property type="method" value="X-ray"/>
    <property type="resolution" value="3.20 A"/>
    <property type="chains" value="A/B/C/D=1-582"/>
</dbReference>
<dbReference type="PDB" id="7NST">
    <property type="method" value="EM"/>
    <property type="resolution" value="3.70 A"/>
    <property type="chains" value="D=1-314"/>
</dbReference>
<dbReference type="PDB" id="7NSU">
    <property type="method" value="EM"/>
    <property type="resolution" value="4.70 A"/>
    <property type="chains" value="D=1-582"/>
</dbReference>
<dbReference type="PDBsum" id="1BXI"/>
<dbReference type="PDBsum" id="1EMV"/>
<dbReference type="PDBsum" id="1FR2"/>
<dbReference type="PDBsum" id="1FSJ"/>
<dbReference type="PDBsum" id="1V13"/>
<dbReference type="PDBsum" id="1V14"/>
<dbReference type="PDBsum" id="1V15"/>
<dbReference type="PDBsum" id="2GYK"/>
<dbReference type="PDBsum" id="2GZE"/>
<dbReference type="PDBsum" id="2GZF"/>
<dbReference type="PDBsum" id="2GZG"/>
<dbReference type="PDBsum" id="2GZI"/>
<dbReference type="PDBsum" id="2GZJ"/>
<dbReference type="PDBsum" id="2IVZ"/>
<dbReference type="PDBsum" id="2K5X"/>
<dbReference type="PDBsum" id="2VLN"/>
<dbReference type="PDBsum" id="2VLO"/>
<dbReference type="PDBsum" id="2VLP"/>
<dbReference type="PDBsum" id="2VLQ"/>
<dbReference type="PDBsum" id="2WPT"/>
<dbReference type="PDBsum" id="3O0E"/>
<dbReference type="PDBsum" id="4JML"/>
<dbReference type="PDBsum" id="5EW5"/>
<dbReference type="PDBsum" id="7NST"/>
<dbReference type="PDBsum" id="7NSU"/>
<dbReference type="BMRB" id="P09883"/>
<dbReference type="EMDB" id="EMD-12576"/>
<dbReference type="EMDB" id="EMD-12577"/>
<dbReference type="EMDB" id="EMD-2372"/>
<dbReference type="SMR" id="P09883"/>
<dbReference type="DIP" id="DIP-16992N"/>
<dbReference type="IntAct" id="P09883">
    <property type="interactions" value="6"/>
</dbReference>
<dbReference type="MINT" id="P09883"/>
<dbReference type="TCDB" id="1.C.1.4.1">
    <property type="family name" value="the channel-forming colicin (colicin) family"/>
</dbReference>
<dbReference type="EvolutionaryTrace" id="P09883"/>
<dbReference type="GO" id="GO:0005727">
    <property type="term" value="C:extrachromosomal circular DNA"/>
    <property type="evidence" value="ECO:0007669"/>
    <property type="project" value="InterPro"/>
</dbReference>
<dbReference type="GO" id="GO:0032991">
    <property type="term" value="C:protein-containing complex"/>
    <property type="evidence" value="ECO:0000314"/>
    <property type="project" value="CAFA"/>
</dbReference>
<dbReference type="GO" id="GO:0004519">
    <property type="term" value="F:endonuclease activity"/>
    <property type="evidence" value="ECO:0000314"/>
    <property type="project" value="CAFA"/>
</dbReference>
<dbReference type="GO" id="GO:0046872">
    <property type="term" value="F:metal ion binding"/>
    <property type="evidence" value="ECO:0007669"/>
    <property type="project" value="UniProtKB-KW"/>
</dbReference>
<dbReference type="GO" id="GO:0019904">
    <property type="term" value="F:protein domain specific binding"/>
    <property type="evidence" value="ECO:0000353"/>
    <property type="project" value="CAFA"/>
</dbReference>
<dbReference type="GO" id="GO:0042742">
    <property type="term" value="P:defense response to bacterium"/>
    <property type="evidence" value="ECO:0007669"/>
    <property type="project" value="UniProtKB-KW"/>
</dbReference>
<dbReference type="GO" id="GO:0031640">
    <property type="term" value="P:killing of cells of another organism"/>
    <property type="evidence" value="ECO:0007669"/>
    <property type="project" value="UniProtKB-KW"/>
</dbReference>
<dbReference type="DisProt" id="DP00342"/>
<dbReference type="FunFam" id="3.90.540.10:FF:000001">
    <property type="entry name" value="Colicin-E9"/>
    <property type="match status" value="1"/>
</dbReference>
<dbReference type="Gene3D" id="3.90.540.10">
    <property type="entry name" value="Colicin/pyocin, DNase domain"/>
    <property type="match status" value="1"/>
</dbReference>
<dbReference type="Gene3D" id="1.10.287.620">
    <property type="entry name" value="Helix Hairpins"/>
    <property type="match status" value="1"/>
</dbReference>
<dbReference type="Gene3D" id="1.20.5.740">
    <property type="entry name" value="Single helix bin"/>
    <property type="match status" value="1"/>
</dbReference>
<dbReference type="InterPro" id="IPR024575">
    <property type="entry name" value="Cloacin_colicin"/>
</dbReference>
<dbReference type="InterPro" id="IPR037146">
    <property type="entry name" value="Colicin/pyocin_DNase_dom_sf"/>
</dbReference>
<dbReference type="InterPro" id="IPR024566">
    <property type="entry name" value="Colicin_R_dom"/>
</dbReference>
<dbReference type="InterPro" id="IPR044925">
    <property type="entry name" value="His-Me_finger_sf"/>
</dbReference>
<dbReference type="InterPro" id="IPR016128">
    <property type="entry name" value="Pyosin/cloacin_T_dom"/>
</dbReference>
<dbReference type="InterPro" id="IPR036302">
    <property type="entry name" value="Pyosin/cloacin_T_dom_sf"/>
</dbReference>
<dbReference type="Pfam" id="PF03515">
    <property type="entry name" value="Cloacin"/>
    <property type="match status" value="1"/>
</dbReference>
<dbReference type="Pfam" id="PF21431">
    <property type="entry name" value="Col-Pyo_DNase"/>
    <property type="match status" value="1"/>
</dbReference>
<dbReference type="Pfam" id="PF11570">
    <property type="entry name" value="E2R135"/>
    <property type="match status" value="1"/>
</dbReference>
<dbReference type="PRINTS" id="PR01295">
    <property type="entry name" value="CLOACIN"/>
</dbReference>
<dbReference type="SUPFAM" id="SSF69369">
    <property type="entry name" value="Cloacin translocation domain"/>
    <property type="match status" value="1"/>
</dbReference>
<dbReference type="SUPFAM" id="SSF69985">
    <property type="entry name" value="Colicin E3 receptor domain"/>
    <property type="match status" value="1"/>
</dbReference>
<dbReference type="SUPFAM" id="SSF54060">
    <property type="entry name" value="His-Me finger endonucleases"/>
    <property type="match status" value="1"/>
</dbReference>
<feature type="chain" id="PRO_0000218684" description="Colicin-E9">
    <location>
        <begin position="1"/>
        <end position="582"/>
    </location>
</feature>
<feature type="region of interest" description="Disordered" evidence="2">
    <location>
        <begin position="1"/>
        <end position="74"/>
    </location>
</feature>
<feature type="region of interest" description="Disordered" evidence="2">
    <location>
        <begin position="246"/>
        <end position="270"/>
    </location>
</feature>
<feature type="region of interest" description="Disordered" evidence="2">
    <location>
        <begin position="294"/>
        <end position="321"/>
    </location>
</feature>
<feature type="region of interest" description="Disordered" evidence="2">
    <location>
        <begin position="422"/>
        <end position="489"/>
    </location>
</feature>
<feature type="region of interest" description="Disordered" evidence="2">
    <location>
        <begin position="510"/>
        <end position="542"/>
    </location>
</feature>
<feature type="compositionally biased region" description="Gly residues" evidence="2">
    <location>
        <begin position="20"/>
        <end position="35"/>
    </location>
</feature>
<feature type="compositionally biased region" description="Low complexity" evidence="2">
    <location>
        <begin position="36"/>
        <end position="45"/>
    </location>
</feature>
<feature type="compositionally biased region" description="Gly residues" evidence="2">
    <location>
        <begin position="46"/>
        <end position="74"/>
    </location>
</feature>
<feature type="compositionally biased region" description="Basic and acidic residues" evidence="2">
    <location>
        <begin position="297"/>
        <end position="321"/>
    </location>
</feature>
<feature type="compositionally biased region" description="Basic and acidic residues" evidence="2">
    <location>
        <begin position="430"/>
        <end position="453"/>
    </location>
</feature>
<feature type="compositionally biased region" description="Basic and acidic residues" evidence="2">
    <location>
        <begin position="465"/>
        <end position="476"/>
    </location>
</feature>
<feature type="compositionally biased region" description="Low complexity" evidence="2">
    <location>
        <begin position="516"/>
        <end position="529"/>
    </location>
</feature>
<feature type="binding site" evidence="1">
    <location>
        <position position="550"/>
    </location>
    <ligand>
        <name>Zn(2+)</name>
        <dbReference type="ChEBI" id="CHEBI:29105"/>
    </ligand>
</feature>
<feature type="binding site" evidence="1">
    <location>
        <position position="575"/>
    </location>
    <ligand>
        <name>Zn(2+)</name>
        <dbReference type="ChEBI" id="CHEBI:29105"/>
    </ligand>
</feature>
<feature type="binding site" evidence="1">
    <location>
        <position position="579"/>
    </location>
    <ligand>
        <name>Zn(2+)</name>
        <dbReference type="ChEBI" id="CHEBI:29105"/>
    </ligand>
</feature>
<feature type="sequence conflict" description="In Ref. 3." evidence="3" ref="3">
    <original>K</original>
    <variation>R</variation>
    <location>
        <position position="511"/>
    </location>
</feature>
<feature type="strand" evidence="7">
    <location>
        <begin position="38"/>
        <end position="40"/>
    </location>
</feature>
<feature type="strand" evidence="9">
    <location>
        <begin position="94"/>
        <end position="96"/>
    </location>
</feature>
<feature type="strand" evidence="9">
    <location>
        <begin position="102"/>
        <end position="104"/>
    </location>
</feature>
<feature type="helix" evidence="9">
    <location>
        <begin position="114"/>
        <end position="124"/>
    </location>
</feature>
<feature type="strand" evidence="9">
    <location>
        <begin position="133"/>
        <end position="136"/>
    </location>
</feature>
<feature type="helix" evidence="9">
    <location>
        <begin position="142"/>
        <end position="148"/>
    </location>
</feature>
<feature type="strand" evidence="9">
    <location>
        <begin position="155"/>
        <end position="161"/>
    </location>
</feature>
<feature type="helix" evidence="9">
    <location>
        <begin position="162"/>
        <end position="164"/>
    </location>
</feature>
<feature type="strand" evidence="9">
    <location>
        <begin position="170"/>
        <end position="173"/>
    </location>
</feature>
<feature type="strand" evidence="9">
    <location>
        <begin position="178"/>
        <end position="191"/>
    </location>
</feature>
<feature type="strand" evidence="9">
    <location>
        <begin position="194"/>
        <end position="211"/>
    </location>
</feature>
<feature type="strand" evidence="9">
    <location>
        <begin position="221"/>
        <end position="224"/>
    </location>
</feature>
<feature type="strand" evidence="9">
    <location>
        <begin position="230"/>
        <end position="233"/>
    </location>
</feature>
<feature type="turn" evidence="9">
    <location>
        <begin position="262"/>
        <end position="267"/>
    </location>
</feature>
<feature type="strand" evidence="9">
    <location>
        <begin position="268"/>
        <end position="274"/>
    </location>
</feature>
<feature type="helix" evidence="9">
    <location>
        <begin position="277"/>
        <end position="279"/>
    </location>
</feature>
<feature type="strand" evidence="9">
    <location>
        <begin position="284"/>
        <end position="290"/>
    </location>
</feature>
<feature type="helix" evidence="9">
    <location>
        <begin position="294"/>
        <end position="313"/>
    </location>
</feature>
<feature type="helix" evidence="9">
    <location>
        <begin position="316"/>
        <end position="375"/>
    </location>
</feature>
<feature type="helix" evidence="9">
    <location>
        <begin position="376"/>
        <end position="381"/>
    </location>
</feature>
<feature type="helix" evidence="5">
    <location>
        <begin position="452"/>
        <end position="454"/>
    </location>
</feature>
<feature type="strand" evidence="6">
    <location>
        <begin position="457"/>
        <end position="460"/>
    </location>
</feature>
<feature type="helix" evidence="5">
    <location>
        <begin position="470"/>
        <end position="473"/>
    </location>
</feature>
<feature type="strand" evidence="8">
    <location>
        <begin position="476"/>
        <end position="478"/>
    </location>
</feature>
<feature type="helix" evidence="5">
    <location>
        <begin position="484"/>
        <end position="490"/>
    </location>
</feature>
<feature type="strand" evidence="5">
    <location>
        <begin position="494"/>
        <end position="497"/>
    </location>
</feature>
<feature type="helix" evidence="5">
    <location>
        <begin position="498"/>
        <end position="511"/>
    </location>
</feature>
<feature type="helix" evidence="5">
    <location>
        <begin position="513"/>
        <end position="516"/>
    </location>
</feature>
<feature type="strand" evidence="4">
    <location>
        <begin position="517"/>
        <end position="519"/>
    </location>
</feature>
<feature type="helix" evidence="5">
    <location>
        <begin position="521"/>
        <end position="528"/>
    </location>
</feature>
<feature type="helix" evidence="5">
    <location>
        <begin position="537"/>
        <end position="539"/>
    </location>
</feature>
<feature type="strand" evidence="5">
    <location>
        <begin position="548"/>
        <end position="553"/>
    </location>
</feature>
<feature type="helix" evidence="5">
    <location>
        <begin position="555"/>
        <end position="557"/>
    </location>
</feature>
<feature type="strand" evidence="5">
    <location>
        <begin position="561"/>
        <end position="563"/>
    </location>
</feature>
<feature type="helix" evidence="5">
    <location>
        <begin position="564"/>
        <end position="566"/>
    </location>
</feature>
<feature type="strand" evidence="5">
    <location>
        <begin position="567"/>
        <end position="570"/>
    </location>
</feature>
<feature type="helix" evidence="5">
    <location>
        <begin position="572"/>
        <end position="579"/>
    </location>
</feature>
<comment type="function">
    <text>This plasmid-coded bactericidal protein is an endonuclease active on both single- and double-stranded DNA but with undefined specificity.</text>
</comment>
<comment type="function">
    <text>Colicins are polypeptide toxins produced by and active against E.coli and closely related bacteria.</text>
</comment>
<comment type="interaction">
    <interactant intactId="EBI-1029888">
        <id>P09883</id>
    </interactant>
    <interactant intactId="EBI-15855054">
        <id>P04482</id>
        <label>imm</label>
    </interactant>
    <organismsDiffer>false</organismsDiffer>
    <experiments>4</experiments>
</comment>
<comment type="interaction">
    <interactant intactId="EBI-1029888">
        <id>P09883</id>
    </interactant>
    <interactant intactId="EBI-1029882">
        <id>P13479</id>
        <label>imm</label>
    </interactant>
    <organismsDiffer>false</organismsDiffer>
    <experiments>4</experiments>
</comment>
<comment type="interaction">
    <interactant intactId="EBI-1029888">
        <id>P09883</id>
    </interactant>
    <interactant intactId="EBI-371336">
        <id>P02931</id>
        <label>ompF</label>
    </interactant>
    <organismsDiffer>true</organismsDiffer>
    <experiments>4</experiments>
</comment>
<comment type="interaction">
    <interactant intactId="EBI-1029888">
        <id>P09883</id>
    </interactant>
    <interactant intactId="EBI-7180728">
        <id>P0A855</id>
        <label>tolB</label>
    </interactant>
    <organismsDiffer>true</organismsDiffer>
    <experiments>9</experiments>
</comment>
<comment type="similarity">
    <text evidence="3">Belongs to the colicin/pyosin nuclease family.</text>
</comment>
<accession>P09883</accession>
<gene>
    <name type="primary">col</name>
    <name type="synonym">cei</name>
</gene>
<organism>
    <name type="scientific">Escherichia coli</name>
    <dbReference type="NCBI Taxonomy" id="562"/>
    <lineage>
        <taxon>Bacteria</taxon>
        <taxon>Pseudomonadati</taxon>
        <taxon>Pseudomonadota</taxon>
        <taxon>Gammaproteobacteria</taxon>
        <taxon>Enterobacterales</taxon>
        <taxon>Enterobacteriaceae</taxon>
        <taxon>Escherichia</taxon>
    </lineage>
</organism>
<sequence>MSGGDGRGHNTGAHSTSGNINGGPTGIGVSGGASDGSGWSSENNPWGGGSGSGIHWGGGSGRGNGGGNGNSGGGSGTGGNLSAVAAPVAFGFPALSTPGAGGLAVSISASELSAAIAGIIAKLKKVNLKFTPFGVVLSSLIPSEIAKDDPNMMSKIVTSLPADDITESPVSSLPLDKATVNVNVRVVDDVKDERQNISVVSGVPMSVPVVDAKPTERPGVFTASIPGAPVLNISVNDSTPAVQTLSPGVTNNTDKDVRPAGFTQGGNTRDAVIRFPKDSGHNAVYVSVSDVLSPDQVKQRQDEENRRQQEWDATHPVEAAERNYERARAELNQANEDVARNQERQAKAVQVYNSRKSELDAANKTLADAIAEIKQFNRFAHDPMAGGHRMWQMAGLKAQRAQTDVNNKQAAFDAAAKEKSDADAALSAAQERRKQKENKEKDAKDKLDKESKRNKPGKATGKGKPVGDKWLDDAGKDSGAPIPDRIADKLRDKEFKSFDDFRKAVWEEVSKDPELSKNLNPSNKSSVSKGYSPFTPKNQQVGGRKVYELHHDKPISQGGEVYDMDNIRVTTPKRHIDIHRGK</sequence>
<evidence type="ECO:0000250" key="1"/>
<evidence type="ECO:0000256" key="2">
    <source>
        <dbReference type="SAM" id="MobiDB-lite"/>
    </source>
</evidence>
<evidence type="ECO:0000305" key="3"/>
<evidence type="ECO:0007829" key="4">
    <source>
        <dbReference type="PDB" id="1BXI"/>
    </source>
</evidence>
<evidence type="ECO:0007829" key="5">
    <source>
        <dbReference type="PDB" id="1FR2"/>
    </source>
</evidence>
<evidence type="ECO:0007829" key="6">
    <source>
        <dbReference type="PDB" id="1V13"/>
    </source>
</evidence>
<evidence type="ECO:0007829" key="7">
    <source>
        <dbReference type="PDB" id="2IVZ"/>
    </source>
</evidence>
<evidence type="ECO:0007829" key="8">
    <source>
        <dbReference type="PDB" id="2WPT"/>
    </source>
</evidence>
<evidence type="ECO:0007829" key="9">
    <source>
        <dbReference type="PDB" id="5EW5"/>
    </source>
</evidence>
<proteinExistence type="evidence at protein level"/>
<keyword id="KW-0002">3D-structure</keyword>
<keyword id="KW-0044">Antibiotic</keyword>
<keyword id="KW-0929">Antimicrobial</keyword>
<keyword id="KW-0078">Bacteriocin</keyword>
<keyword id="KW-0255">Endonuclease</keyword>
<keyword id="KW-0378">Hydrolase</keyword>
<keyword id="KW-0479">Metal-binding</keyword>
<keyword id="KW-0540">Nuclease</keyword>
<keyword id="KW-0614">Plasmid</keyword>
<keyword id="KW-0862">Zinc</keyword>
<protein>
    <recommendedName>
        <fullName>Colicin-E9</fullName>
        <ecNumber>3.1.-.-</ecNumber>
    </recommendedName>
</protein>
<name>CEA9_ECOLX</name>
<geneLocation type="plasmid">
    <name>ColE9</name>
</geneLocation>
<reference key="1">
    <citation type="submission" date="1996-06" db="EMBL/GenBank/DDBJ databases">
        <authorList>
            <person name="James R."/>
        </authorList>
    </citation>
    <scope>NUCLEOTIDE SEQUENCE [GENOMIC DNA]</scope>
</reference>
<reference key="2">
    <citation type="journal article" date="1989" name="Mol. Gen. Genet.">
        <title>Nucleotide sequences from the colicin E5, E6 and E9 operons: presence of a degenerate transposon-like structure in the ColE9-J plasmid.</title>
        <authorList>
            <person name="Lau P.C.K."/>
            <person name="Condie J.A."/>
        </authorList>
    </citation>
    <scope>NUCLEOTIDE SEQUENCE [GENOMIC DNA] OF 378-582</scope>
</reference>
<reference key="3">
    <citation type="journal article" date="1989" name="Nucleic Acids Res.">
        <title>Complete nucleotide sequence of the colicin E9 (cei) gene.</title>
        <authorList>
            <person name="Eaton T."/>
            <person name="James R."/>
        </authorList>
    </citation>
    <scope>NUCLEOTIDE SEQUENCE [GENOMIC DNA] OF 509-582</scope>
</reference>